<proteinExistence type="evidence at protein level"/>
<comment type="function">
    <text evidence="1 5 8 9">Functions as part of axonemal radial spoke complexes that play an important part in the motility of sperm and cilia (PubMed:30383886, PubMed:34871179, PubMed:36417862). Essential for both the radial spoke head assembly and the central pair microtubule stability in ependymal motile cilia (PubMed:30383886). Required for motility of olfactory and neural cilia and for the structural integrity of ciliary axonemes in both 9+0 and 9+2 motile cilia (By similarity).</text>
</comment>
<comment type="subunit">
    <text evidence="2 4 7 8 9">Component of the axonemal radial spoke 1 (RS1) and 2 (RS2) complexes, at least composed of spoke head proteins RSPH1, RSPH3, RSPH9 and the cilia-specific component RSPH4A or sperm-specific component RSPH6A, spoke stalk proteins RSPH14, DNAJB13, DYDC1, ROPN1L and NME5, and the RS1 complex-specific anchor protein IQUB (PubMed:34871179, PubMed:36417862). Interacts with IQUB (PubMed:36417862). Interacts with RSPH3B (PubMed:34871179). Interacts with RSPH4A (PubMed:34871179). Interacts with RSPH6A (PubMed:30185526, PubMed:34871179). Interacts with CFAP61 (PubMed:34792097). Interacts with LRRC23 (By similarity).</text>
</comment>
<comment type="subcellular location">
    <subcellularLocation>
        <location evidence="5 8 11">Cytoplasm</location>
        <location evidence="5 8 11">Cytoskeleton</location>
        <location evidence="5 8 11">Cilium axoneme</location>
    </subcellularLocation>
    <subcellularLocation>
        <location evidence="4 12">Cytoplasm</location>
        <location evidence="4 12">Cytoskeleton</location>
        <location evidence="4 12">Flagellum axoneme</location>
    </subcellularLocation>
    <subcellularLocation>
        <location evidence="1">Cell projection</location>
        <location evidence="1">Kinocilium</location>
    </subcellularLocation>
</comment>
<comment type="tissue specificity">
    <text evidence="5 6 8">Expressed in the testis, trachea, lung, oviduct and ependymal cells (at protein level).</text>
</comment>
<comment type="developmental stage">
    <text evidence="3">Expressed in the embryonic node at 7.5 dpc and in the nasal, lung, tracheal and brain ventricle epithelium at 18.5-19.5 dpc.</text>
</comment>
<comment type="disruption phenotype">
    <text evidence="5">RNAi-mediated depletion in the ependymal cilia results in a near complete central pair apparatus loss and alters the ciliary beat pattern from planar to rotational (PubMed:30383886). Multiple radial spokes proteins, including those in the head, are markedly down-regulated in the cilia (PubMed:30383886).</text>
</comment>
<comment type="similarity">
    <text evidence="10">Belongs to the flagellar radial spoke RSP9 family.</text>
</comment>
<name>RSPH9_MOUSE</name>
<evidence type="ECO:0000250" key="1">
    <source>
        <dbReference type="UniProtKB" id="Q5TYW6"/>
    </source>
</evidence>
<evidence type="ECO:0000250" key="2">
    <source>
        <dbReference type="UniProtKB" id="Q9H1X1"/>
    </source>
</evidence>
<evidence type="ECO:0000269" key="3">
    <source>
    </source>
</evidence>
<evidence type="ECO:0000269" key="4">
    <source>
    </source>
</evidence>
<evidence type="ECO:0000269" key="5">
    <source>
    </source>
</evidence>
<evidence type="ECO:0000269" key="6">
    <source>
    </source>
</evidence>
<evidence type="ECO:0000269" key="7">
    <source>
    </source>
</evidence>
<evidence type="ECO:0000269" key="8">
    <source>
    </source>
</evidence>
<evidence type="ECO:0000269" key="9">
    <source>
    </source>
</evidence>
<evidence type="ECO:0000305" key="10"/>
<evidence type="ECO:0000305" key="11">
    <source>
    </source>
</evidence>
<evidence type="ECO:0000305" key="12">
    <source>
    </source>
</evidence>
<evidence type="ECO:0007744" key="13">
    <source>
        <dbReference type="PDB" id="7DMP"/>
    </source>
</evidence>
<evidence type="ECO:0007829" key="14">
    <source>
        <dbReference type="PDB" id="7DMP"/>
    </source>
</evidence>
<keyword id="KW-0002">3D-structure</keyword>
<keyword id="KW-0966">Cell projection</keyword>
<keyword id="KW-0969">Cilium</keyword>
<keyword id="KW-0970">Cilium biogenesis/degradation</keyword>
<keyword id="KW-0963">Cytoplasm</keyword>
<keyword id="KW-0206">Cytoskeleton</keyword>
<keyword id="KW-0282">Flagellum</keyword>
<keyword id="KW-1185">Reference proteome</keyword>
<sequence length="276" mass="31331">MDADSLLLSLELASGSGQGLSPDRRASLLTSLMLVKRDYRFARVLFWGRILGLVADYYIAQGLSEDQLAPRKTLYSLNCTEWSLLPPATEEMAMQISVVSGRFMGDPSHEYEHTELQKVNEGEKVFDEEVVVQIKEETRLVSIIDQIDKAVAIIPRGALFKTPFGVTHVNRTFEGLPLSEVRKLSSYFHFREAIDLKNKTLLEKSDLEPSLDFLDSLEYDIPRGSWSIQMERGNALVVLRSLLWPGLTFYHAPRTKNYGYIYVGTGEKNMDLPFML</sequence>
<organism>
    <name type="scientific">Mus musculus</name>
    <name type="common">Mouse</name>
    <dbReference type="NCBI Taxonomy" id="10090"/>
    <lineage>
        <taxon>Eukaryota</taxon>
        <taxon>Metazoa</taxon>
        <taxon>Chordata</taxon>
        <taxon>Craniata</taxon>
        <taxon>Vertebrata</taxon>
        <taxon>Euteleostomi</taxon>
        <taxon>Mammalia</taxon>
        <taxon>Eutheria</taxon>
        <taxon>Euarchontoglires</taxon>
        <taxon>Glires</taxon>
        <taxon>Rodentia</taxon>
        <taxon>Myomorpha</taxon>
        <taxon>Muroidea</taxon>
        <taxon>Muridae</taxon>
        <taxon>Murinae</taxon>
        <taxon>Mus</taxon>
        <taxon>Mus</taxon>
    </lineage>
</organism>
<feature type="chain" id="PRO_0000089562" description="Radial spoke head protein 9 homolog">
    <location>
        <begin position="1"/>
        <end position="276"/>
    </location>
</feature>
<feature type="helix" evidence="14">
    <location>
        <begin position="6"/>
        <end position="8"/>
    </location>
</feature>
<feature type="strand" evidence="14">
    <location>
        <begin position="15"/>
        <end position="17"/>
    </location>
</feature>
<feature type="turn" evidence="14">
    <location>
        <begin position="22"/>
        <end position="24"/>
    </location>
</feature>
<feature type="helix" evidence="14">
    <location>
        <begin position="25"/>
        <end position="38"/>
    </location>
</feature>
<feature type="strand" evidence="14">
    <location>
        <begin position="44"/>
        <end position="48"/>
    </location>
</feature>
<feature type="strand" evidence="14">
    <location>
        <begin position="53"/>
        <end position="55"/>
    </location>
</feature>
<feature type="strand" evidence="14">
    <location>
        <begin position="59"/>
        <end position="62"/>
    </location>
</feature>
<feature type="strand" evidence="14">
    <location>
        <begin position="72"/>
        <end position="75"/>
    </location>
</feature>
<feature type="strand" evidence="14">
    <location>
        <begin position="77"/>
        <end position="81"/>
    </location>
</feature>
<feature type="helix" evidence="14">
    <location>
        <begin position="90"/>
        <end position="95"/>
    </location>
</feature>
<feature type="helix" evidence="14">
    <location>
        <begin position="96"/>
        <end position="98"/>
    </location>
</feature>
<feature type="strand" evidence="14">
    <location>
        <begin position="105"/>
        <end position="108"/>
    </location>
</feature>
<feature type="helix" evidence="14">
    <location>
        <begin position="136"/>
        <end position="148"/>
    </location>
</feature>
<feature type="turn" evidence="14">
    <location>
        <begin position="156"/>
        <end position="158"/>
    </location>
</feature>
<feature type="strand" evidence="14">
    <location>
        <begin position="163"/>
        <end position="165"/>
    </location>
</feature>
<feature type="helix" evidence="14">
    <location>
        <begin position="178"/>
        <end position="180"/>
    </location>
</feature>
<feature type="strand" evidence="14">
    <location>
        <begin position="182"/>
        <end position="184"/>
    </location>
</feature>
<feature type="strand" evidence="14">
    <location>
        <begin position="188"/>
        <end position="191"/>
    </location>
</feature>
<feature type="strand" evidence="14">
    <location>
        <begin position="226"/>
        <end position="232"/>
    </location>
</feature>
<feature type="strand" evidence="14">
    <location>
        <begin position="237"/>
        <end position="244"/>
    </location>
</feature>
<feature type="strand" evidence="14">
    <location>
        <begin position="247"/>
        <end position="251"/>
    </location>
</feature>
<feature type="strand" evidence="14">
    <location>
        <begin position="253"/>
        <end position="255"/>
    </location>
</feature>
<feature type="strand" evidence="14">
    <location>
        <begin position="259"/>
        <end position="262"/>
    </location>
</feature>
<feature type="helix" evidence="14">
    <location>
        <begin position="272"/>
        <end position="275"/>
    </location>
</feature>
<dbReference type="EMBL" id="AK006440">
    <property type="protein sequence ID" value="BAB24590.1"/>
    <property type="molecule type" value="mRNA"/>
</dbReference>
<dbReference type="EMBL" id="BC019423">
    <property type="protein sequence ID" value="AAH19423.1"/>
    <property type="molecule type" value="mRNA"/>
</dbReference>
<dbReference type="CCDS" id="CCDS28820.1"/>
<dbReference type="RefSeq" id="NP_083614.1">
    <property type="nucleotide sequence ID" value="NM_029338.4"/>
</dbReference>
<dbReference type="PDB" id="7DMP">
    <property type="method" value="EM"/>
    <property type="resolution" value="3.20 A"/>
    <property type="chains" value="C/c=1-276"/>
</dbReference>
<dbReference type="PDB" id="8WZB">
    <property type="method" value="EM"/>
    <property type="resolution" value="3.28 A"/>
    <property type="chains" value="H/c=1-276"/>
</dbReference>
<dbReference type="PDB" id="8X2U">
    <property type="method" value="EM"/>
    <property type="resolution" value="3.57 A"/>
    <property type="chains" value="H/P/c/d=1-276"/>
</dbReference>
<dbReference type="PDBsum" id="7DMP"/>
<dbReference type="PDBsum" id="8WZB"/>
<dbReference type="PDBsum" id="8X2U"/>
<dbReference type="EMDB" id="EMD-30766"/>
<dbReference type="EMDB" id="EMD-37949"/>
<dbReference type="EMDB" id="EMD-38020"/>
<dbReference type="SMR" id="Q9D9V4"/>
<dbReference type="ComplexPortal" id="CPX-8161">
    <property type="entry name" value="Radial spoke complex, ciliiar variant"/>
</dbReference>
<dbReference type="ComplexPortal" id="CPX-8162">
    <property type="entry name" value="Radial spoke complex, flagellar variant"/>
</dbReference>
<dbReference type="CORUM" id="Q9D9V4"/>
<dbReference type="FunCoup" id="Q9D9V4">
    <property type="interactions" value="130"/>
</dbReference>
<dbReference type="STRING" id="10090.ENSMUSP00000024762"/>
<dbReference type="GlyGen" id="Q9D9V4">
    <property type="glycosylation" value="1 site, 1 N-linked glycan (1 site)"/>
</dbReference>
<dbReference type="PhosphoSitePlus" id="Q9D9V4"/>
<dbReference type="SwissPalm" id="Q9D9V4"/>
<dbReference type="PaxDb" id="10090-ENSMUSP00000024762"/>
<dbReference type="ProteomicsDB" id="262714"/>
<dbReference type="Antibodypedia" id="30558">
    <property type="antibodies" value="69 antibodies from 17 providers"/>
</dbReference>
<dbReference type="DNASU" id="75564"/>
<dbReference type="Ensembl" id="ENSMUST00000024762.3">
    <property type="protein sequence ID" value="ENSMUSP00000024762.3"/>
    <property type="gene ID" value="ENSMUSG00000023966.9"/>
</dbReference>
<dbReference type="GeneID" id="75564"/>
<dbReference type="KEGG" id="mmu:75564"/>
<dbReference type="UCSC" id="uc008crt.1">
    <property type="organism name" value="mouse"/>
</dbReference>
<dbReference type="AGR" id="MGI:1922814"/>
<dbReference type="CTD" id="221421"/>
<dbReference type="MGI" id="MGI:1922814">
    <property type="gene designation" value="Rsph9"/>
</dbReference>
<dbReference type="VEuPathDB" id="HostDB:ENSMUSG00000023966"/>
<dbReference type="eggNOG" id="ENOG502QR99">
    <property type="taxonomic scope" value="Eukaryota"/>
</dbReference>
<dbReference type="GeneTree" id="ENSGT00390000018686"/>
<dbReference type="HOGENOM" id="CLU_068343_1_0_1"/>
<dbReference type="InParanoid" id="Q9D9V4"/>
<dbReference type="OMA" id="TFYHVPN"/>
<dbReference type="OrthoDB" id="10258956at2759"/>
<dbReference type="PhylomeDB" id="Q9D9V4"/>
<dbReference type="TreeFam" id="TF323644"/>
<dbReference type="BioGRID-ORCS" id="75564">
    <property type="hits" value="2 hits in 78 CRISPR screens"/>
</dbReference>
<dbReference type="ChiTaRS" id="Rsph9">
    <property type="organism name" value="mouse"/>
</dbReference>
<dbReference type="PRO" id="PR:Q9D9V4"/>
<dbReference type="Proteomes" id="UP000000589">
    <property type="component" value="Chromosome 17"/>
</dbReference>
<dbReference type="RNAct" id="Q9D9V4">
    <property type="molecule type" value="protein"/>
</dbReference>
<dbReference type="Bgee" id="ENSMUSG00000023966">
    <property type="expression patterns" value="Expressed in spermatid and 164 other cell types or tissues"/>
</dbReference>
<dbReference type="ExpressionAtlas" id="Q9D9V4">
    <property type="expression patterns" value="baseline and differential"/>
</dbReference>
<dbReference type="GO" id="GO:0097729">
    <property type="term" value="C:9+2 motile cilium"/>
    <property type="evidence" value="ECO:0000314"/>
    <property type="project" value="UniProtKB"/>
</dbReference>
<dbReference type="GO" id="GO:0005930">
    <property type="term" value="C:axoneme"/>
    <property type="evidence" value="ECO:0000314"/>
    <property type="project" value="UniProtKB"/>
</dbReference>
<dbReference type="GO" id="GO:0005576">
    <property type="term" value="C:extracellular region"/>
    <property type="evidence" value="ECO:0007669"/>
    <property type="project" value="GOC"/>
</dbReference>
<dbReference type="GO" id="GO:0060091">
    <property type="term" value="C:kinocilium"/>
    <property type="evidence" value="ECO:0007669"/>
    <property type="project" value="UniProtKB-SubCell"/>
</dbReference>
<dbReference type="GO" id="GO:0031514">
    <property type="term" value="C:motile cilium"/>
    <property type="evidence" value="ECO:0000314"/>
    <property type="project" value="UniProtKB"/>
</dbReference>
<dbReference type="GO" id="GO:0001534">
    <property type="term" value="C:radial spoke"/>
    <property type="evidence" value="ECO:0000314"/>
    <property type="project" value="UniProtKB"/>
</dbReference>
<dbReference type="GO" id="GO:0001535">
    <property type="term" value="C:radial spoke head"/>
    <property type="evidence" value="ECO:0000314"/>
    <property type="project" value="UniProtKB"/>
</dbReference>
<dbReference type="GO" id="GO:0120336">
    <property type="term" value="C:radial spoke head 1"/>
    <property type="evidence" value="ECO:0000314"/>
    <property type="project" value="MGI"/>
</dbReference>
<dbReference type="GO" id="GO:0120338">
    <property type="term" value="C:radial spoke head 3"/>
    <property type="evidence" value="ECO:0000314"/>
    <property type="project" value="MGI"/>
</dbReference>
<dbReference type="GO" id="GO:0036126">
    <property type="term" value="C:sperm flagellum"/>
    <property type="evidence" value="ECO:0000314"/>
    <property type="project" value="UniProtKB"/>
</dbReference>
<dbReference type="GO" id="GO:1904158">
    <property type="term" value="P:axonemal central apparatus assembly"/>
    <property type="evidence" value="ECO:0000315"/>
    <property type="project" value="UniProtKB"/>
</dbReference>
<dbReference type="GO" id="GO:0035082">
    <property type="term" value="P:axoneme assembly"/>
    <property type="evidence" value="ECO:0000316"/>
    <property type="project" value="BHF-UCL"/>
</dbReference>
<dbReference type="GO" id="GO:0003341">
    <property type="term" value="P:cilium movement"/>
    <property type="evidence" value="ECO:0000316"/>
    <property type="project" value="BHF-UCL"/>
</dbReference>
<dbReference type="GO" id="GO:0003351">
    <property type="term" value="P:epithelial cilium movement involved in extracellular fluid movement"/>
    <property type="evidence" value="ECO:0000305"/>
    <property type="project" value="UniProtKB"/>
</dbReference>
<dbReference type="GO" id="GO:0030317">
    <property type="term" value="P:flagellated sperm motility"/>
    <property type="evidence" value="ECO:0000305"/>
    <property type="project" value="UniProtKB"/>
</dbReference>
<dbReference type="GO" id="GO:0007618">
    <property type="term" value="P:mating"/>
    <property type="evidence" value="ECO:0000305"/>
    <property type="project" value="UniProtKB"/>
</dbReference>
<dbReference type="GO" id="GO:0062177">
    <property type="term" value="P:radial spoke assembly"/>
    <property type="evidence" value="ECO:0000315"/>
    <property type="project" value="UniProtKB"/>
</dbReference>
<dbReference type="InterPro" id="IPR055316">
    <property type="entry name" value="RSP9"/>
</dbReference>
<dbReference type="PANTHER" id="PTHR22069">
    <property type="entry name" value="MITOCHONDRIAL RIBOSOMAL PROTEIN S18"/>
    <property type="match status" value="1"/>
</dbReference>
<dbReference type="PANTHER" id="PTHR22069:SF0">
    <property type="entry name" value="RADIAL SPOKE HEAD PROTEIN 9 HOMOLOG"/>
    <property type="match status" value="1"/>
</dbReference>
<accession>Q9D9V4</accession>
<protein>
    <recommendedName>
        <fullName>Radial spoke head protein 9 homolog</fullName>
    </recommendedName>
</protein>
<reference key="1">
    <citation type="journal article" date="2005" name="Science">
        <title>The transcriptional landscape of the mammalian genome.</title>
        <authorList>
            <person name="Carninci P."/>
            <person name="Kasukawa T."/>
            <person name="Katayama S."/>
            <person name="Gough J."/>
            <person name="Frith M.C."/>
            <person name="Maeda N."/>
            <person name="Oyama R."/>
            <person name="Ravasi T."/>
            <person name="Lenhard B."/>
            <person name="Wells C."/>
            <person name="Kodzius R."/>
            <person name="Shimokawa K."/>
            <person name="Bajic V.B."/>
            <person name="Brenner S.E."/>
            <person name="Batalov S."/>
            <person name="Forrest A.R."/>
            <person name="Zavolan M."/>
            <person name="Davis M.J."/>
            <person name="Wilming L.G."/>
            <person name="Aidinis V."/>
            <person name="Allen J.E."/>
            <person name="Ambesi-Impiombato A."/>
            <person name="Apweiler R."/>
            <person name="Aturaliya R.N."/>
            <person name="Bailey T.L."/>
            <person name="Bansal M."/>
            <person name="Baxter L."/>
            <person name="Beisel K.W."/>
            <person name="Bersano T."/>
            <person name="Bono H."/>
            <person name="Chalk A.M."/>
            <person name="Chiu K.P."/>
            <person name="Choudhary V."/>
            <person name="Christoffels A."/>
            <person name="Clutterbuck D.R."/>
            <person name="Crowe M.L."/>
            <person name="Dalla E."/>
            <person name="Dalrymple B.P."/>
            <person name="de Bono B."/>
            <person name="Della Gatta G."/>
            <person name="di Bernardo D."/>
            <person name="Down T."/>
            <person name="Engstrom P."/>
            <person name="Fagiolini M."/>
            <person name="Faulkner G."/>
            <person name="Fletcher C.F."/>
            <person name="Fukushima T."/>
            <person name="Furuno M."/>
            <person name="Futaki S."/>
            <person name="Gariboldi M."/>
            <person name="Georgii-Hemming P."/>
            <person name="Gingeras T.R."/>
            <person name="Gojobori T."/>
            <person name="Green R.E."/>
            <person name="Gustincich S."/>
            <person name="Harbers M."/>
            <person name="Hayashi Y."/>
            <person name="Hensch T.K."/>
            <person name="Hirokawa N."/>
            <person name="Hill D."/>
            <person name="Huminiecki L."/>
            <person name="Iacono M."/>
            <person name="Ikeo K."/>
            <person name="Iwama A."/>
            <person name="Ishikawa T."/>
            <person name="Jakt M."/>
            <person name="Kanapin A."/>
            <person name="Katoh M."/>
            <person name="Kawasawa Y."/>
            <person name="Kelso J."/>
            <person name="Kitamura H."/>
            <person name="Kitano H."/>
            <person name="Kollias G."/>
            <person name="Krishnan S.P."/>
            <person name="Kruger A."/>
            <person name="Kummerfeld S.K."/>
            <person name="Kurochkin I.V."/>
            <person name="Lareau L.F."/>
            <person name="Lazarevic D."/>
            <person name="Lipovich L."/>
            <person name="Liu J."/>
            <person name="Liuni S."/>
            <person name="McWilliam S."/>
            <person name="Madan Babu M."/>
            <person name="Madera M."/>
            <person name="Marchionni L."/>
            <person name="Matsuda H."/>
            <person name="Matsuzawa S."/>
            <person name="Miki H."/>
            <person name="Mignone F."/>
            <person name="Miyake S."/>
            <person name="Morris K."/>
            <person name="Mottagui-Tabar S."/>
            <person name="Mulder N."/>
            <person name="Nakano N."/>
            <person name="Nakauchi H."/>
            <person name="Ng P."/>
            <person name="Nilsson R."/>
            <person name="Nishiguchi S."/>
            <person name="Nishikawa S."/>
            <person name="Nori F."/>
            <person name="Ohara O."/>
            <person name="Okazaki Y."/>
            <person name="Orlando V."/>
            <person name="Pang K.C."/>
            <person name="Pavan W.J."/>
            <person name="Pavesi G."/>
            <person name="Pesole G."/>
            <person name="Petrovsky N."/>
            <person name="Piazza S."/>
            <person name="Reed J."/>
            <person name="Reid J.F."/>
            <person name="Ring B.Z."/>
            <person name="Ringwald M."/>
            <person name="Rost B."/>
            <person name="Ruan Y."/>
            <person name="Salzberg S.L."/>
            <person name="Sandelin A."/>
            <person name="Schneider C."/>
            <person name="Schoenbach C."/>
            <person name="Sekiguchi K."/>
            <person name="Semple C.A."/>
            <person name="Seno S."/>
            <person name="Sessa L."/>
            <person name="Sheng Y."/>
            <person name="Shibata Y."/>
            <person name="Shimada H."/>
            <person name="Shimada K."/>
            <person name="Silva D."/>
            <person name="Sinclair B."/>
            <person name="Sperling S."/>
            <person name="Stupka E."/>
            <person name="Sugiura K."/>
            <person name="Sultana R."/>
            <person name="Takenaka Y."/>
            <person name="Taki K."/>
            <person name="Tammoja K."/>
            <person name="Tan S.L."/>
            <person name="Tang S."/>
            <person name="Taylor M.S."/>
            <person name="Tegner J."/>
            <person name="Teichmann S.A."/>
            <person name="Ueda H.R."/>
            <person name="van Nimwegen E."/>
            <person name="Verardo R."/>
            <person name="Wei C.L."/>
            <person name="Yagi K."/>
            <person name="Yamanishi H."/>
            <person name="Zabarovsky E."/>
            <person name="Zhu S."/>
            <person name="Zimmer A."/>
            <person name="Hide W."/>
            <person name="Bult C."/>
            <person name="Grimmond S.M."/>
            <person name="Teasdale R.D."/>
            <person name="Liu E.T."/>
            <person name="Brusic V."/>
            <person name="Quackenbush J."/>
            <person name="Wahlestedt C."/>
            <person name="Mattick J.S."/>
            <person name="Hume D.A."/>
            <person name="Kai C."/>
            <person name="Sasaki D."/>
            <person name="Tomaru Y."/>
            <person name="Fukuda S."/>
            <person name="Kanamori-Katayama M."/>
            <person name="Suzuki M."/>
            <person name="Aoki J."/>
            <person name="Arakawa T."/>
            <person name="Iida J."/>
            <person name="Imamura K."/>
            <person name="Itoh M."/>
            <person name="Kato T."/>
            <person name="Kawaji H."/>
            <person name="Kawagashira N."/>
            <person name="Kawashima T."/>
            <person name="Kojima M."/>
            <person name="Kondo S."/>
            <person name="Konno H."/>
            <person name="Nakano K."/>
            <person name="Ninomiya N."/>
            <person name="Nishio T."/>
            <person name="Okada M."/>
            <person name="Plessy C."/>
            <person name="Shibata K."/>
            <person name="Shiraki T."/>
            <person name="Suzuki S."/>
            <person name="Tagami M."/>
            <person name="Waki K."/>
            <person name="Watahiki A."/>
            <person name="Okamura-Oho Y."/>
            <person name="Suzuki H."/>
            <person name="Kawai J."/>
            <person name="Hayashizaki Y."/>
        </authorList>
    </citation>
    <scope>NUCLEOTIDE SEQUENCE [LARGE SCALE MRNA]</scope>
    <source>
        <strain>C57BL/6J</strain>
        <tissue>Testis</tissue>
    </source>
</reference>
<reference key="2">
    <citation type="journal article" date="2004" name="Genome Res.">
        <title>The status, quality, and expansion of the NIH full-length cDNA project: the Mammalian Gene Collection (MGC).</title>
        <authorList>
            <consortium name="The MGC Project Team"/>
        </authorList>
    </citation>
    <scope>NUCLEOTIDE SEQUENCE [LARGE SCALE MRNA]</scope>
    <source>
        <strain>FVB/N</strain>
        <tissue>Salivary gland</tissue>
    </source>
</reference>
<reference key="3">
    <citation type="journal article" date="2009" name="Am. J. Hum. Genet.">
        <title>Mutations in radial spoke head protein genes RSPH9 and RSPH4A cause primary ciliary dyskinesia with central-microtubular-pair abnormalities.</title>
        <authorList>
            <person name="Castleman V.H."/>
            <person name="Romio L."/>
            <person name="Chodhari R."/>
            <person name="Hirst R.A."/>
            <person name="de Castro S.C.P."/>
            <person name="Parker K.A."/>
            <person name="Ybot-Gonzalez P."/>
            <person name="Emes R.D."/>
            <person name="Wilson S.W."/>
            <person name="Wallis C."/>
            <person name="Johnson C.A."/>
            <person name="Herrera R.J."/>
            <person name="Rutman A."/>
            <person name="Dixon M."/>
            <person name="Shoemark A."/>
            <person name="Bush A."/>
            <person name="Hogg C."/>
            <person name="Gardiner R.M."/>
            <person name="Reish O."/>
            <person name="Greene N.D.E."/>
            <person name="O'Callaghan C."/>
            <person name="Purton S."/>
            <person name="Chung E.M.K."/>
            <person name="Mitchison H.M."/>
        </authorList>
    </citation>
    <scope>TISSUE SPECIFICITY</scope>
</reference>
<reference key="4">
    <citation type="journal article" date="2010" name="Cell">
        <title>A tissue-specific atlas of mouse protein phosphorylation and expression.</title>
        <authorList>
            <person name="Huttlin E.L."/>
            <person name="Jedrychowski M.P."/>
            <person name="Elias J.E."/>
            <person name="Goswami T."/>
            <person name="Rad R."/>
            <person name="Beausoleil S.A."/>
            <person name="Villen J."/>
            <person name="Haas W."/>
            <person name="Sowa M.E."/>
            <person name="Gygi S.P."/>
        </authorList>
    </citation>
    <scope>IDENTIFICATION BY MASS SPECTROMETRY [LARGE SCALE ANALYSIS]</scope>
    <source>
        <tissue>Testis</tissue>
    </source>
</reference>
<reference key="5">
    <citation type="journal article" date="2018" name="J. Cell Sci.">
        <title>RSPH6A is required for sperm flagellum formation and male fertility in mice.</title>
        <authorList>
            <person name="Abbasi F."/>
            <person name="Miyata H."/>
            <person name="Shimada K."/>
            <person name="Morohoshi A."/>
            <person name="Nozawa K."/>
            <person name="Matsumura T."/>
            <person name="Xu Z."/>
            <person name="Pratiwi P."/>
            <person name="Ikawa M."/>
        </authorList>
    </citation>
    <scope>INTERACTION WITH RSPH6A</scope>
    <scope>SUBCELLULAR LOCATION</scope>
</reference>
<reference key="6">
    <citation type="journal article" date="2019" name="Biol. Cell">
        <title>Rsph9 is critical for ciliary radial spoke assembly and central pair microtubule stability.</title>
        <authorList>
            <person name="Zhu L."/>
            <person name="Liu H."/>
            <person name="Chen Y."/>
            <person name="Yan X."/>
            <person name="Zhu X."/>
        </authorList>
    </citation>
    <scope>FUNCTION</scope>
    <scope>SUBCELLULAR LOCATION</scope>
    <scope>DISRUPTION PHENOTYPE</scope>
    <scope>TISSUE SPECIFICITY</scope>
</reference>
<reference key="7">
    <citation type="journal article" date="2020" name="PLoS Genet.">
        <title>Rsph4a is essential for the triplet radial spoke head assembly of the mouse motile cilia.</title>
        <authorList>
            <person name="Yoke H."/>
            <person name="Ueno H."/>
            <person name="Narita A."/>
            <person name="Sakai T."/>
            <person name="Horiuchi K."/>
            <person name="Shingyoji C."/>
            <person name="Hamada H."/>
            <person name="Shinohara K."/>
        </authorList>
    </citation>
    <scope>SUBCELLULAR LOCATION</scope>
    <scope>TISSUE SPECIFICITY</scope>
</reference>
<reference key="8">
    <citation type="journal article" date="2022" name="Cell Rep.">
        <title>Differential requirements of IQUB for the assembly of radial spoke 1 and the motility of mouse cilia and flagella.</title>
        <authorList>
            <person name="Zhang X."/>
            <person name="Xiao Z."/>
            <person name="Zhang J."/>
            <person name="Xu C."/>
            <person name="Liu S."/>
            <person name="Cheng L."/>
            <person name="Zhou S."/>
            <person name="Zhao S."/>
            <person name="Zhang Y."/>
            <person name="Wu J."/>
            <person name="Wang Y."/>
            <person name="Liu M."/>
        </authorList>
    </citation>
    <scope>FUNCTION</scope>
    <scope>IDENTIFICATION IN RADIAL SPOKE COMPLEX 1</scope>
    <scope>INTERACTION WITH IQUB</scope>
    <scope>IDENTIFICATION BY MASS SPECTROMETRY</scope>
    <scope>SUBCELLULAR LOCATION</scope>
</reference>
<reference evidence="13" key="9">
    <citation type="journal article" date="2021" name="Proc. Natl. Acad. Sci. U.S.A.">
        <title>Distinct architecture and composition of mouse axonemal radial spoke head revealed by cryo-EM.</title>
        <authorList>
            <person name="Zheng W."/>
            <person name="Li F."/>
            <person name="Ding Z."/>
            <person name="Liu H."/>
            <person name="Zhu L."/>
            <person name="Xu C."/>
            <person name="Li J."/>
            <person name="Gao Q."/>
            <person name="Wang Y."/>
            <person name="Fu Z."/>
            <person name="Peng C."/>
            <person name="Yan X."/>
            <person name="Zhu X."/>
            <person name="Cong Y."/>
        </authorList>
    </citation>
    <scope>STRUCTURE BY ELECTRON MICROSCOPY (3.20 ANGSTROMS)</scope>
    <scope>FUNCTION</scope>
    <scope>IDENTIFICATION IN RADIAL SPOKE COMPLEX 1 AND RADIAL SPOKE COMPLEX 2</scope>
    <scope>INTERACTION WITH RSPH3B; RSPH4A AND RSPH6A</scope>
    <scope>IDENTIFICATION BY MASS SPECTROMETRY</scope>
    <scope>SUBCELLULAR LOCATION</scope>
    <scope>TISSUE SPECIFICITY</scope>
</reference>
<reference key="10">
    <citation type="journal article" date="2021" name="Development">
        <title>CFAP61 is required for sperm flagellum formation and male fertility in human and mouse.</title>
        <authorList>
            <person name="Liu S."/>
            <person name="Zhang J."/>
            <person name="Kherraf Z.E."/>
            <person name="Sun S."/>
            <person name="Zhang X."/>
            <person name="Cazin C."/>
            <person name="Coutton C."/>
            <person name="Zouari R."/>
            <person name="Zhao S."/>
            <person name="Hu F."/>
            <person name="Fourati Ben Mustapha S."/>
            <person name="Arnoult C."/>
            <person name="Ray P.F."/>
            <person name="Liu M."/>
        </authorList>
    </citation>
    <scope>INTERACTION WITH CFAP61</scope>
</reference>
<gene>
    <name type="primary">Rsph9</name>
</gene>